<protein>
    <recommendedName>
        <fullName evidence="1">Bifunctional purine biosynthesis protein PurH</fullName>
    </recommendedName>
    <domain>
        <recommendedName>
            <fullName evidence="1">Phosphoribosylaminoimidazolecarboxamide formyltransferase</fullName>
            <ecNumber evidence="1">2.1.2.3</ecNumber>
        </recommendedName>
        <alternativeName>
            <fullName evidence="1">AICAR transformylase</fullName>
        </alternativeName>
    </domain>
    <domain>
        <recommendedName>
            <fullName evidence="1">IMP cyclohydrolase</fullName>
            <ecNumber evidence="1">3.5.4.10</ecNumber>
        </recommendedName>
        <alternativeName>
            <fullName evidence="1">ATIC</fullName>
        </alternativeName>
        <alternativeName>
            <fullName evidence="1">IMP synthase</fullName>
        </alternativeName>
        <alternativeName>
            <fullName evidence="1">Inosinicase</fullName>
        </alternativeName>
    </domain>
</protein>
<proteinExistence type="inferred from homology"/>
<reference key="1">
    <citation type="journal article" date="2009" name="PLoS Genet.">
        <title>Organised genome dynamics in the Escherichia coli species results in highly diverse adaptive paths.</title>
        <authorList>
            <person name="Touchon M."/>
            <person name="Hoede C."/>
            <person name="Tenaillon O."/>
            <person name="Barbe V."/>
            <person name="Baeriswyl S."/>
            <person name="Bidet P."/>
            <person name="Bingen E."/>
            <person name="Bonacorsi S."/>
            <person name="Bouchier C."/>
            <person name="Bouvet O."/>
            <person name="Calteau A."/>
            <person name="Chiapello H."/>
            <person name="Clermont O."/>
            <person name="Cruveiller S."/>
            <person name="Danchin A."/>
            <person name="Diard M."/>
            <person name="Dossat C."/>
            <person name="Karoui M.E."/>
            <person name="Frapy E."/>
            <person name="Garry L."/>
            <person name="Ghigo J.M."/>
            <person name="Gilles A.M."/>
            <person name="Johnson J."/>
            <person name="Le Bouguenec C."/>
            <person name="Lescat M."/>
            <person name="Mangenot S."/>
            <person name="Martinez-Jehanne V."/>
            <person name="Matic I."/>
            <person name="Nassif X."/>
            <person name="Oztas S."/>
            <person name="Petit M.A."/>
            <person name="Pichon C."/>
            <person name="Rouy Z."/>
            <person name="Ruf C.S."/>
            <person name="Schneider D."/>
            <person name="Tourret J."/>
            <person name="Vacherie B."/>
            <person name="Vallenet D."/>
            <person name="Medigue C."/>
            <person name="Rocha E.P.C."/>
            <person name="Denamur E."/>
        </authorList>
    </citation>
    <scope>NUCLEOTIDE SEQUENCE [LARGE SCALE GENOMIC DNA]</scope>
    <source>
        <strain>IAI1</strain>
    </source>
</reference>
<keyword id="KW-0007">Acetylation</keyword>
<keyword id="KW-0378">Hydrolase</keyword>
<keyword id="KW-0511">Multifunctional enzyme</keyword>
<keyword id="KW-0658">Purine biosynthesis</keyword>
<keyword id="KW-0808">Transferase</keyword>
<sequence length="529" mass="57358">MQQRRPVRRALLSVSDKAGIVEFAQALSARGVELLSTGGTARLLAEKGLPVTEVSDYTGFPEMMDGRVKTLHPKVHGGILGRRGQDDAIMEEHQIQPIDMVVVNLYPFAQTVAREGCSLEDAVENIDIGGPTMVRSAAKNHKDVAIVVKSSDYDAIIKEMDDNEGSLTLATRFDLAIKAFEHTAAYDSMIANYFGSMVPAYHGESKEAAGRFPRTLNLNFIKKQDMRYGENSHQQAAFYIEENVKEASVATATQVQGKALSYNNIADTDAALECVKEFAEPACVIVKHANPCGVAIGNSILDAYDRAYKTDPTSAFGGIIAFNRELDAETAQAIISRQFVEVIIAPSASEEALKITAAKQNVRVLTCGQWGERVPGLDFKRVNGGLLVQDRDLGMVGAEELRVVTQRQPTEQELRDALFCWKVAKFVKSNAIVYAKNNMTIGIGAGQMSRVYSAKIAGIKAADEGLEVKGSSMASDAFFPFRDGIDAAAAAGVTCVIQPGGSIRDDEVIAAADEHGIAMLFTDMRHFRH</sequence>
<name>PUR9_ECO8A</name>
<comment type="catalytic activity">
    <reaction evidence="1">
        <text>(6R)-10-formyltetrahydrofolate + 5-amino-1-(5-phospho-beta-D-ribosyl)imidazole-4-carboxamide = 5-formamido-1-(5-phospho-D-ribosyl)imidazole-4-carboxamide + (6S)-5,6,7,8-tetrahydrofolate</text>
        <dbReference type="Rhea" id="RHEA:22192"/>
        <dbReference type="ChEBI" id="CHEBI:57453"/>
        <dbReference type="ChEBI" id="CHEBI:58467"/>
        <dbReference type="ChEBI" id="CHEBI:58475"/>
        <dbReference type="ChEBI" id="CHEBI:195366"/>
        <dbReference type="EC" id="2.1.2.3"/>
    </reaction>
</comment>
<comment type="catalytic activity">
    <reaction evidence="1">
        <text>IMP + H2O = 5-formamido-1-(5-phospho-D-ribosyl)imidazole-4-carboxamide</text>
        <dbReference type="Rhea" id="RHEA:18445"/>
        <dbReference type="ChEBI" id="CHEBI:15377"/>
        <dbReference type="ChEBI" id="CHEBI:58053"/>
        <dbReference type="ChEBI" id="CHEBI:58467"/>
        <dbReference type="EC" id="3.5.4.10"/>
    </reaction>
</comment>
<comment type="pathway">
    <text evidence="1">Purine metabolism; IMP biosynthesis via de novo pathway; 5-formamido-1-(5-phospho-D-ribosyl)imidazole-4-carboxamide from 5-amino-1-(5-phospho-D-ribosyl)imidazole-4-carboxamide (10-formyl THF route): step 1/1.</text>
</comment>
<comment type="pathway">
    <text evidence="1">Purine metabolism; IMP biosynthesis via de novo pathway; IMP from 5-formamido-1-(5-phospho-D-ribosyl)imidazole-4-carboxamide: step 1/1.</text>
</comment>
<comment type="domain">
    <text evidence="1">The IMP cyclohydrolase activity resides in the N-terminal region.</text>
</comment>
<comment type="similarity">
    <text evidence="1">Belongs to the PurH family.</text>
</comment>
<evidence type="ECO:0000255" key="1">
    <source>
        <dbReference type="HAMAP-Rule" id="MF_00139"/>
    </source>
</evidence>
<evidence type="ECO:0000255" key="2">
    <source>
        <dbReference type="PROSITE-ProRule" id="PRU01202"/>
    </source>
</evidence>
<accession>B7M7R5</accession>
<feature type="chain" id="PRO_1000117872" description="Bifunctional purine biosynthesis protein PurH">
    <location>
        <begin position="1"/>
        <end position="529"/>
    </location>
</feature>
<feature type="domain" description="MGS-like" evidence="2">
    <location>
        <begin position="1"/>
        <end position="148"/>
    </location>
</feature>
<feature type="modified residue" description="N6-acetyllysine" evidence="1">
    <location>
        <position position="287"/>
    </location>
</feature>
<gene>
    <name evidence="1" type="primary">purH</name>
    <name type="ordered locus">ECIAI1_4221</name>
</gene>
<organism>
    <name type="scientific">Escherichia coli O8 (strain IAI1)</name>
    <dbReference type="NCBI Taxonomy" id="585034"/>
    <lineage>
        <taxon>Bacteria</taxon>
        <taxon>Pseudomonadati</taxon>
        <taxon>Pseudomonadota</taxon>
        <taxon>Gammaproteobacteria</taxon>
        <taxon>Enterobacterales</taxon>
        <taxon>Enterobacteriaceae</taxon>
        <taxon>Escherichia</taxon>
    </lineage>
</organism>
<dbReference type="EC" id="2.1.2.3" evidence="1"/>
<dbReference type="EC" id="3.5.4.10" evidence="1"/>
<dbReference type="EMBL" id="CU928160">
    <property type="protein sequence ID" value="CAR00980.1"/>
    <property type="molecule type" value="Genomic_DNA"/>
</dbReference>
<dbReference type="RefSeq" id="WP_001187566.1">
    <property type="nucleotide sequence ID" value="NC_011741.1"/>
</dbReference>
<dbReference type="SMR" id="B7M7R5"/>
<dbReference type="KEGG" id="ecr:ECIAI1_4221"/>
<dbReference type="HOGENOM" id="CLU_016316_5_2_6"/>
<dbReference type="UniPathway" id="UPA00074">
    <property type="reaction ID" value="UER00133"/>
</dbReference>
<dbReference type="UniPathway" id="UPA00074">
    <property type="reaction ID" value="UER00135"/>
</dbReference>
<dbReference type="GO" id="GO:0005829">
    <property type="term" value="C:cytosol"/>
    <property type="evidence" value="ECO:0007669"/>
    <property type="project" value="TreeGrafter"/>
</dbReference>
<dbReference type="GO" id="GO:0003937">
    <property type="term" value="F:IMP cyclohydrolase activity"/>
    <property type="evidence" value="ECO:0007669"/>
    <property type="project" value="UniProtKB-UniRule"/>
</dbReference>
<dbReference type="GO" id="GO:0004643">
    <property type="term" value="F:phosphoribosylaminoimidazolecarboxamide formyltransferase activity"/>
    <property type="evidence" value="ECO:0007669"/>
    <property type="project" value="UniProtKB-UniRule"/>
</dbReference>
<dbReference type="GO" id="GO:0006189">
    <property type="term" value="P:'de novo' IMP biosynthetic process"/>
    <property type="evidence" value="ECO:0007669"/>
    <property type="project" value="UniProtKB-UniRule"/>
</dbReference>
<dbReference type="CDD" id="cd01421">
    <property type="entry name" value="IMPCH"/>
    <property type="match status" value="1"/>
</dbReference>
<dbReference type="FunFam" id="3.40.140.20:FF:000001">
    <property type="entry name" value="Bifunctional purine biosynthesis protein PurH"/>
    <property type="match status" value="1"/>
</dbReference>
<dbReference type="FunFam" id="3.40.140.20:FF:000002">
    <property type="entry name" value="Bifunctional purine biosynthesis protein PurH"/>
    <property type="match status" value="1"/>
</dbReference>
<dbReference type="FunFam" id="3.40.50.1380:FF:000001">
    <property type="entry name" value="Bifunctional purine biosynthesis protein PurH"/>
    <property type="match status" value="1"/>
</dbReference>
<dbReference type="Gene3D" id="3.40.140.20">
    <property type="match status" value="2"/>
</dbReference>
<dbReference type="Gene3D" id="3.40.50.1380">
    <property type="entry name" value="Methylglyoxal synthase-like domain"/>
    <property type="match status" value="1"/>
</dbReference>
<dbReference type="HAMAP" id="MF_00139">
    <property type="entry name" value="PurH"/>
    <property type="match status" value="1"/>
</dbReference>
<dbReference type="InterPro" id="IPR024051">
    <property type="entry name" value="AICAR_Tfase_dup_dom_sf"/>
</dbReference>
<dbReference type="InterPro" id="IPR016193">
    <property type="entry name" value="Cytidine_deaminase-like"/>
</dbReference>
<dbReference type="InterPro" id="IPR011607">
    <property type="entry name" value="MGS-like_dom"/>
</dbReference>
<dbReference type="InterPro" id="IPR036914">
    <property type="entry name" value="MGS-like_dom_sf"/>
</dbReference>
<dbReference type="InterPro" id="IPR002695">
    <property type="entry name" value="PurH-like"/>
</dbReference>
<dbReference type="NCBIfam" id="NF002049">
    <property type="entry name" value="PRK00881.1"/>
    <property type="match status" value="1"/>
</dbReference>
<dbReference type="NCBIfam" id="TIGR00355">
    <property type="entry name" value="purH"/>
    <property type="match status" value="1"/>
</dbReference>
<dbReference type="PANTHER" id="PTHR11692:SF0">
    <property type="entry name" value="BIFUNCTIONAL PURINE BIOSYNTHESIS PROTEIN ATIC"/>
    <property type="match status" value="1"/>
</dbReference>
<dbReference type="PANTHER" id="PTHR11692">
    <property type="entry name" value="BIFUNCTIONAL PURINE BIOSYNTHESIS PROTEIN PURH"/>
    <property type="match status" value="1"/>
</dbReference>
<dbReference type="Pfam" id="PF01808">
    <property type="entry name" value="AICARFT_IMPCHas"/>
    <property type="match status" value="1"/>
</dbReference>
<dbReference type="Pfam" id="PF02142">
    <property type="entry name" value="MGS"/>
    <property type="match status" value="1"/>
</dbReference>
<dbReference type="PIRSF" id="PIRSF000414">
    <property type="entry name" value="AICARFT_IMPCHas"/>
    <property type="match status" value="1"/>
</dbReference>
<dbReference type="SMART" id="SM00798">
    <property type="entry name" value="AICARFT_IMPCHas"/>
    <property type="match status" value="1"/>
</dbReference>
<dbReference type="SMART" id="SM00851">
    <property type="entry name" value="MGS"/>
    <property type="match status" value="1"/>
</dbReference>
<dbReference type="SUPFAM" id="SSF53927">
    <property type="entry name" value="Cytidine deaminase-like"/>
    <property type="match status" value="1"/>
</dbReference>
<dbReference type="SUPFAM" id="SSF52335">
    <property type="entry name" value="Methylglyoxal synthase-like"/>
    <property type="match status" value="1"/>
</dbReference>
<dbReference type="PROSITE" id="PS51855">
    <property type="entry name" value="MGS"/>
    <property type="match status" value="1"/>
</dbReference>